<evidence type="ECO:0000255" key="1">
    <source>
        <dbReference type="HAMAP-Rule" id="MF_00171"/>
    </source>
</evidence>
<accession>B1MVY3</accession>
<protein>
    <recommendedName>
        <fullName evidence="1">tRNA pseudouridine synthase A</fullName>
        <ecNumber evidence="1">5.4.99.12</ecNumber>
    </recommendedName>
    <alternativeName>
        <fullName evidence="1">tRNA pseudouridine(38-40) synthase</fullName>
    </alternativeName>
    <alternativeName>
        <fullName evidence="1">tRNA pseudouridylate synthase I</fullName>
    </alternativeName>
    <alternativeName>
        <fullName evidence="1">tRNA-uridine isomerase I</fullName>
    </alternativeName>
</protein>
<keyword id="KW-0413">Isomerase</keyword>
<keyword id="KW-1185">Reference proteome</keyword>
<keyword id="KW-0819">tRNA processing</keyword>
<name>TRUA_LEUCK</name>
<dbReference type="EC" id="5.4.99.12" evidence="1"/>
<dbReference type="EMBL" id="DQ489736">
    <property type="protein sequence ID" value="ACA83387.1"/>
    <property type="molecule type" value="Genomic_DNA"/>
</dbReference>
<dbReference type="RefSeq" id="WP_004899376.1">
    <property type="nucleotide sequence ID" value="NC_010471.1"/>
</dbReference>
<dbReference type="SMR" id="B1MVY3"/>
<dbReference type="STRING" id="349519.LCK_01564"/>
<dbReference type="GeneID" id="61103273"/>
<dbReference type="KEGG" id="lci:LCK_01564"/>
<dbReference type="eggNOG" id="COG0101">
    <property type="taxonomic scope" value="Bacteria"/>
</dbReference>
<dbReference type="HOGENOM" id="CLU_014673_0_1_9"/>
<dbReference type="OrthoDB" id="9811823at2"/>
<dbReference type="Proteomes" id="UP000002166">
    <property type="component" value="Chromosome"/>
</dbReference>
<dbReference type="GO" id="GO:0003723">
    <property type="term" value="F:RNA binding"/>
    <property type="evidence" value="ECO:0007669"/>
    <property type="project" value="InterPro"/>
</dbReference>
<dbReference type="GO" id="GO:0160147">
    <property type="term" value="F:tRNA pseudouridine(38-40) synthase activity"/>
    <property type="evidence" value="ECO:0007669"/>
    <property type="project" value="UniProtKB-EC"/>
</dbReference>
<dbReference type="GO" id="GO:0031119">
    <property type="term" value="P:tRNA pseudouridine synthesis"/>
    <property type="evidence" value="ECO:0007669"/>
    <property type="project" value="UniProtKB-UniRule"/>
</dbReference>
<dbReference type="CDD" id="cd02570">
    <property type="entry name" value="PseudoU_synth_EcTruA"/>
    <property type="match status" value="1"/>
</dbReference>
<dbReference type="FunFam" id="3.30.70.580:FF:000001">
    <property type="entry name" value="tRNA pseudouridine synthase A"/>
    <property type="match status" value="1"/>
</dbReference>
<dbReference type="Gene3D" id="3.30.70.660">
    <property type="entry name" value="Pseudouridine synthase I, catalytic domain, C-terminal subdomain"/>
    <property type="match status" value="1"/>
</dbReference>
<dbReference type="Gene3D" id="3.30.70.580">
    <property type="entry name" value="Pseudouridine synthase I, catalytic domain, N-terminal subdomain"/>
    <property type="match status" value="1"/>
</dbReference>
<dbReference type="HAMAP" id="MF_00171">
    <property type="entry name" value="TruA"/>
    <property type="match status" value="1"/>
</dbReference>
<dbReference type="InterPro" id="IPR020103">
    <property type="entry name" value="PsdUridine_synth_cat_dom_sf"/>
</dbReference>
<dbReference type="InterPro" id="IPR001406">
    <property type="entry name" value="PsdUridine_synth_TruA"/>
</dbReference>
<dbReference type="InterPro" id="IPR020097">
    <property type="entry name" value="PsdUridine_synth_TruA_a/b_dom"/>
</dbReference>
<dbReference type="InterPro" id="IPR020095">
    <property type="entry name" value="PsdUridine_synth_TruA_C"/>
</dbReference>
<dbReference type="InterPro" id="IPR020094">
    <property type="entry name" value="TruA/RsuA/RluB/E/F_N"/>
</dbReference>
<dbReference type="NCBIfam" id="TIGR00071">
    <property type="entry name" value="hisT_truA"/>
    <property type="match status" value="1"/>
</dbReference>
<dbReference type="PANTHER" id="PTHR11142">
    <property type="entry name" value="PSEUDOURIDYLATE SYNTHASE"/>
    <property type="match status" value="1"/>
</dbReference>
<dbReference type="PANTHER" id="PTHR11142:SF0">
    <property type="entry name" value="TRNA PSEUDOURIDINE SYNTHASE-LIKE 1"/>
    <property type="match status" value="1"/>
</dbReference>
<dbReference type="Pfam" id="PF01416">
    <property type="entry name" value="PseudoU_synth_1"/>
    <property type="match status" value="2"/>
</dbReference>
<dbReference type="PIRSF" id="PIRSF001430">
    <property type="entry name" value="tRNA_psdUrid_synth"/>
    <property type="match status" value="1"/>
</dbReference>
<dbReference type="SUPFAM" id="SSF55120">
    <property type="entry name" value="Pseudouridine synthase"/>
    <property type="match status" value="1"/>
</dbReference>
<comment type="function">
    <text evidence="1">Formation of pseudouridine at positions 38, 39 and 40 in the anticodon stem and loop of transfer RNAs.</text>
</comment>
<comment type="catalytic activity">
    <reaction evidence="1">
        <text>uridine(38/39/40) in tRNA = pseudouridine(38/39/40) in tRNA</text>
        <dbReference type="Rhea" id="RHEA:22376"/>
        <dbReference type="Rhea" id="RHEA-COMP:10085"/>
        <dbReference type="Rhea" id="RHEA-COMP:10087"/>
        <dbReference type="ChEBI" id="CHEBI:65314"/>
        <dbReference type="ChEBI" id="CHEBI:65315"/>
        <dbReference type="EC" id="5.4.99.12"/>
    </reaction>
</comment>
<comment type="subunit">
    <text evidence="1">Homodimer.</text>
</comment>
<comment type="similarity">
    <text evidence="1">Belongs to the tRNA pseudouridine synthase TruA family.</text>
</comment>
<organism>
    <name type="scientific">Leuconostoc citreum (strain KM20)</name>
    <dbReference type="NCBI Taxonomy" id="349519"/>
    <lineage>
        <taxon>Bacteria</taxon>
        <taxon>Bacillati</taxon>
        <taxon>Bacillota</taxon>
        <taxon>Bacilli</taxon>
        <taxon>Lactobacillales</taxon>
        <taxon>Lactobacillaceae</taxon>
        <taxon>Leuconostoc</taxon>
    </lineage>
</organism>
<proteinExistence type="inferred from homology"/>
<sequence length="260" mass="29159">MTRYKAIVAYDGSNFFGFQVQTKSGVEVQRTVQGELNKAVNQMAKQPVTPIKVVGASRTDTGVHAFGQVVHFDLPFDINPVGVSKGLNTLLPRDILIKAVTKVSDDFHARFSTHAKRYFYRVSTTAFTDPFKRHYTGHFHWHLDTSRIQEALPDLIGEHDFASFAASGNQTASTVRTITSAQLIEKPDEQELVFVFEGNAFLYNQIRIMVGVLLEIGNGRREIHDIQRLIAVKDREQARFTAPASGLYLDEIDYGENPAN</sequence>
<gene>
    <name evidence="1" type="primary">truA</name>
    <name type="ordered locus">LCK_01564</name>
</gene>
<reference key="1">
    <citation type="journal article" date="2008" name="J. Bacteriol.">
        <title>Complete genome sequence of Leuconostoc citreum KM20.</title>
        <authorList>
            <person name="Kim J.F."/>
            <person name="Jeong H."/>
            <person name="Lee J.-S."/>
            <person name="Choi S.-H."/>
            <person name="Ha M."/>
            <person name="Hur C.-G."/>
            <person name="Kim J.-S."/>
            <person name="Lee S."/>
            <person name="Park H.-S."/>
            <person name="Park Y.-H."/>
            <person name="Oh T.K."/>
        </authorList>
    </citation>
    <scope>NUCLEOTIDE SEQUENCE [LARGE SCALE GENOMIC DNA]</scope>
    <source>
        <strain>KM20</strain>
    </source>
</reference>
<feature type="chain" id="PRO_1000097757" description="tRNA pseudouridine synthase A">
    <location>
        <begin position="1"/>
        <end position="260"/>
    </location>
</feature>
<feature type="active site" description="Nucleophile" evidence="1">
    <location>
        <position position="60"/>
    </location>
</feature>
<feature type="binding site" evidence="1">
    <location>
        <position position="118"/>
    </location>
    <ligand>
        <name>substrate</name>
    </ligand>
</feature>